<comment type="function">
    <text evidence="1">Involved in the oxidation of myo-inositol (MI) to 2-keto-myo-inositol (2KMI or 2-inosose).</text>
</comment>
<comment type="catalytic activity">
    <reaction evidence="1">
        <text>myo-inositol + NAD(+) = scyllo-inosose + NADH + H(+)</text>
        <dbReference type="Rhea" id="RHEA:16949"/>
        <dbReference type="ChEBI" id="CHEBI:15378"/>
        <dbReference type="ChEBI" id="CHEBI:17268"/>
        <dbReference type="ChEBI" id="CHEBI:17811"/>
        <dbReference type="ChEBI" id="CHEBI:57540"/>
        <dbReference type="ChEBI" id="CHEBI:57945"/>
        <dbReference type="EC" id="1.1.1.18"/>
    </reaction>
</comment>
<comment type="subunit">
    <text evidence="1">Homotetramer.</text>
</comment>
<comment type="similarity">
    <text evidence="1">Belongs to the Gfo/Idh/MocA family.</text>
</comment>
<feature type="chain" id="PRO_0000352566" description="Inositol 2-dehydrogenase">
    <location>
        <begin position="1"/>
        <end position="337"/>
    </location>
</feature>
<proteinExistence type="inferred from homology"/>
<name>IOLG_CORGL</name>
<protein>
    <recommendedName>
        <fullName evidence="1">Inositol 2-dehydrogenase</fullName>
        <ecNumber evidence="1">1.1.1.18</ecNumber>
    </recommendedName>
    <alternativeName>
        <fullName evidence="1">Myo-inositol 2-dehydrogenase</fullName>
        <shortName evidence="1">MI 2-dehydrogenase</shortName>
    </alternativeName>
</protein>
<organism>
    <name type="scientific">Corynebacterium glutamicum (strain ATCC 13032 / DSM 20300 / JCM 1318 / BCRC 11384 / CCUG 27702 / LMG 3730 / NBRC 12168 / NCIMB 10025 / NRRL B-2784 / 534)</name>
    <dbReference type="NCBI Taxonomy" id="196627"/>
    <lineage>
        <taxon>Bacteria</taxon>
        <taxon>Bacillati</taxon>
        <taxon>Actinomycetota</taxon>
        <taxon>Actinomycetes</taxon>
        <taxon>Mycobacteriales</taxon>
        <taxon>Corynebacteriaceae</taxon>
        <taxon>Corynebacterium</taxon>
    </lineage>
</organism>
<keyword id="KW-0520">NAD</keyword>
<keyword id="KW-0560">Oxidoreductase</keyword>
<keyword id="KW-1185">Reference proteome</keyword>
<gene>
    <name evidence="1" type="primary">iolG</name>
    <name type="ordered locus">Cgl0164</name>
    <name type="ordered locus">cg0204</name>
</gene>
<accession>Q8NTY7</accession>
<accession>Q6M8J3</accession>
<dbReference type="EC" id="1.1.1.18" evidence="1"/>
<dbReference type="EMBL" id="BA000036">
    <property type="protein sequence ID" value="BAB97557.1"/>
    <property type="molecule type" value="Genomic_DNA"/>
</dbReference>
<dbReference type="EMBL" id="BX927148">
    <property type="protein sequence ID" value="CAF18731.1"/>
    <property type="molecule type" value="Genomic_DNA"/>
</dbReference>
<dbReference type="RefSeq" id="NP_599416.1">
    <property type="nucleotide sequence ID" value="NC_003450.3"/>
</dbReference>
<dbReference type="RefSeq" id="WP_011013436.1">
    <property type="nucleotide sequence ID" value="NC_006958.1"/>
</dbReference>
<dbReference type="SMR" id="Q8NTY7"/>
<dbReference type="STRING" id="196627.cg0204"/>
<dbReference type="KEGG" id="cgb:cg0204"/>
<dbReference type="KEGG" id="cgl:Cgl0164"/>
<dbReference type="PATRIC" id="fig|196627.13.peg.168"/>
<dbReference type="eggNOG" id="COG0673">
    <property type="taxonomic scope" value="Bacteria"/>
</dbReference>
<dbReference type="HOGENOM" id="CLU_023194_0_1_11"/>
<dbReference type="OrthoDB" id="256869at2"/>
<dbReference type="BioCyc" id="CORYNE:G18NG-9713-MONOMER"/>
<dbReference type="BRENDA" id="1.1.1.18">
    <property type="organism ID" value="960"/>
</dbReference>
<dbReference type="Proteomes" id="UP000000582">
    <property type="component" value="Chromosome"/>
</dbReference>
<dbReference type="Proteomes" id="UP000001009">
    <property type="component" value="Chromosome"/>
</dbReference>
<dbReference type="GO" id="GO:0050112">
    <property type="term" value="F:inositol 2-dehydrogenase (NAD+) activity"/>
    <property type="evidence" value="ECO:0007669"/>
    <property type="project" value="UniProtKB-UniRule"/>
</dbReference>
<dbReference type="GO" id="GO:0000166">
    <property type="term" value="F:nucleotide binding"/>
    <property type="evidence" value="ECO:0007669"/>
    <property type="project" value="InterPro"/>
</dbReference>
<dbReference type="GO" id="GO:0019310">
    <property type="term" value="P:inositol catabolic process"/>
    <property type="evidence" value="ECO:0007669"/>
    <property type="project" value="UniProtKB-UniRule"/>
</dbReference>
<dbReference type="Gene3D" id="3.30.360.10">
    <property type="entry name" value="Dihydrodipicolinate Reductase, domain 2"/>
    <property type="match status" value="1"/>
</dbReference>
<dbReference type="Gene3D" id="3.40.50.720">
    <property type="entry name" value="NAD(P)-binding Rossmann-like Domain"/>
    <property type="match status" value="1"/>
</dbReference>
<dbReference type="HAMAP" id="MF_01671">
    <property type="entry name" value="IolG"/>
    <property type="match status" value="1"/>
</dbReference>
<dbReference type="InterPro" id="IPR050424">
    <property type="entry name" value="Gfo-Idh-MocA_inositol_DH"/>
</dbReference>
<dbReference type="InterPro" id="IPR000683">
    <property type="entry name" value="Gfo/Idh/MocA-like_OxRdtase_N"/>
</dbReference>
<dbReference type="InterPro" id="IPR055170">
    <property type="entry name" value="GFO_IDH_MocA-like_dom"/>
</dbReference>
<dbReference type="InterPro" id="IPR023794">
    <property type="entry name" value="MI/DCI_dehydrogenase"/>
</dbReference>
<dbReference type="InterPro" id="IPR036291">
    <property type="entry name" value="NAD(P)-bd_dom_sf"/>
</dbReference>
<dbReference type="PANTHER" id="PTHR43593">
    <property type="match status" value="1"/>
</dbReference>
<dbReference type="PANTHER" id="PTHR43593:SF1">
    <property type="entry name" value="INOSITOL 2-DEHYDROGENASE"/>
    <property type="match status" value="1"/>
</dbReference>
<dbReference type="Pfam" id="PF01408">
    <property type="entry name" value="GFO_IDH_MocA"/>
    <property type="match status" value="1"/>
</dbReference>
<dbReference type="Pfam" id="PF22725">
    <property type="entry name" value="GFO_IDH_MocA_C3"/>
    <property type="match status" value="1"/>
</dbReference>
<dbReference type="SUPFAM" id="SSF55347">
    <property type="entry name" value="Glyceraldehyde-3-phosphate dehydrogenase-like, C-terminal domain"/>
    <property type="match status" value="1"/>
</dbReference>
<dbReference type="SUPFAM" id="SSF51735">
    <property type="entry name" value="NAD(P)-binding Rossmann-fold domains"/>
    <property type="match status" value="1"/>
</dbReference>
<reference key="1">
    <citation type="journal article" date="2003" name="Appl. Microbiol. Biotechnol.">
        <title>The Corynebacterium glutamicum genome: features and impacts on biotechnological processes.</title>
        <authorList>
            <person name="Ikeda M."/>
            <person name="Nakagawa S."/>
        </authorList>
    </citation>
    <scope>NUCLEOTIDE SEQUENCE [LARGE SCALE GENOMIC DNA]</scope>
    <source>
        <strain>ATCC 13032 / DSM 20300 / JCM 1318 / BCRC 11384 / CCUG 27702 / LMG 3730 / NBRC 12168 / NCIMB 10025 / NRRL B-2784 / 534</strain>
    </source>
</reference>
<reference key="2">
    <citation type="journal article" date="2003" name="J. Biotechnol.">
        <title>The complete Corynebacterium glutamicum ATCC 13032 genome sequence and its impact on the production of L-aspartate-derived amino acids and vitamins.</title>
        <authorList>
            <person name="Kalinowski J."/>
            <person name="Bathe B."/>
            <person name="Bartels D."/>
            <person name="Bischoff N."/>
            <person name="Bott M."/>
            <person name="Burkovski A."/>
            <person name="Dusch N."/>
            <person name="Eggeling L."/>
            <person name="Eikmanns B.J."/>
            <person name="Gaigalat L."/>
            <person name="Goesmann A."/>
            <person name="Hartmann M."/>
            <person name="Huthmacher K."/>
            <person name="Kraemer R."/>
            <person name="Linke B."/>
            <person name="McHardy A.C."/>
            <person name="Meyer F."/>
            <person name="Moeckel B."/>
            <person name="Pfefferle W."/>
            <person name="Puehler A."/>
            <person name="Rey D.A."/>
            <person name="Rueckert C."/>
            <person name="Rupp O."/>
            <person name="Sahm H."/>
            <person name="Wendisch V.F."/>
            <person name="Wiegraebe I."/>
            <person name="Tauch A."/>
        </authorList>
    </citation>
    <scope>NUCLEOTIDE SEQUENCE [LARGE SCALE GENOMIC DNA]</scope>
    <source>
        <strain>ATCC 13032 / DSM 20300 / JCM 1318 / BCRC 11384 / CCUG 27702 / LMG 3730 / NBRC 12168 / NCIMB 10025 / NRRL B-2784 / 534</strain>
    </source>
</reference>
<sequence length="337" mass="36431">MSKSLRVGVVGAGAMGADHIDRINNRTSGAHISAIIEPDAARAAAAAEDAPGAQAFTRIEDAIAADAVDAVLIAVPGQFHEPVLVPALEAGLPILCEKPLTPDSESSLRIVELEQKLDKPHIQVGFMRRFDPEYNNLRKLVESGEAGELLMLRGLHRNPSVGESYTQSMLITDSVVHEFDVIPWLAGSRVVSVEVKYPKTSSLAHSGLKEPILVIMELENGVLVDVEMNVNIQFGYQVATEAVFEKGLARIGQPSGMQRWRDGEFLINEHTDFTTRFATAYDRQIQSWVDAVHEGTLVAGPNAWDGYLVALSCEAGVKALDGGVIPVDAAPRPDFYA</sequence>
<evidence type="ECO:0000255" key="1">
    <source>
        <dbReference type="HAMAP-Rule" id="MF_01671"/>
    </source>
</evidence>